<comment type="function">
    <text evidence="1 2 7">One of the major pre-mRNA-binding proteins. Binds tenaciously to poly(C) sequences. Likely to play a role in the nuclear metabolism of hnRNAs, particularly for pre-mRNAs that contain cytidine-rich sequences. Can also bind poly(C) single-stranded DNA. Plays an important role in p53/TP53 response to DNA damage, acting at the level of both transcription activation and repression. When sumoylated, acts as a transcriptional coactivator of p53/TP53, playing a role in p21/CDKN1A and 14-3-3 sigma/SFN induction (By similarity). As far as transcription repression is concerned, acts by interacting with long intergenic RNA p21 (lincRNA-p21), a non-coding RNA induced by p53/TP53. This interaction is necessary for the induction of apoptosis, but not cell cycle arrest. As part of a ribonucleoprotein complex composed at least of ZNF827, HNRNPL and the circular RNA circZNF827 that nucleates the complex on chromatin, may negatively regulate the transcription of genes involved in neuronal differentiation (By similarity).</text>
</comment>
<comment type="subunit">
    <text evidence="2 3 8 9">Identified in the spliceosome C complex (By similarity). Part of a transcription inhibitory ribonucleoprotein complex composed at least of the circular RNA circZNF827, ZNF827 and HNRNPL (By similarity). Interacts with ANKRD28 and RBM42 (By similarity). Interacts with DDX1 (By similarity). Interacts with MDM2; this interaction leads to ubiquitination and proteasomal degradation (By similarity). Interacts with p53/TP53 (By similarity). Interacts with ZIK1 (PubMed:8910362). Interacts with BRDT (PubMed:22570411). Interacts with IVNS1ABP (via BACK domain); the interaction is direct (By similarity). Interacts with PPIA/CYPA (By similarity).</text>
</comment>
<comment type="subcellular location">
    <subcellularLocation>
        <location evidence="2">Cytoplasm</location>
    </subcellularLocation>
    <subcellularLocation>
        <location evidence="2">Nucleus</location>
        <location evidence="2">Nucleoplasm</location>
    </subcellularLocation>
    <subcellularLocation>
        <location evidence="2">Cell projection</location>
        <location evidence="2">Podosome</location>
    </subcellularLocation>
</comment>
<comment type="alternative products">
    <event type="alternative splicing"/>
    <isoform>
        <id>P61979-1</id>
        <id>Q07244-1</id>
        <name>1</name>
        <sequence type="displayed"/>
    </isoform>
    <isoform>
        <id>P61979-2</id>
        <id>Q07244-2</id>
        <name>2</name>
        <sequence type="described" ref="VSP_010622"/>
    </isoform>
    <isoform>
        <id>P61979-3</id>
        <name>3</name>
        <sequence type="described" ref="VSP_012581"/>
    </isoform>
</comment>
<comment type="induction">
    <text evidence="6">By DNA damage. This up-regulation is due to protein stabilization. The constitutive protein levels are controlled by MDM2-mediated ubiquitination and degradation via the proteasome pathway.</text>
</comment>
<comment type="PTM">
    <text evidence="1">Sumoylated by CBX4. Sumoylation is increased upon DNA damage, such as that produced by doxorubicin, etoposide, UV light and camptothecin, due to enhanced CBX4 phosphorylation by HIPK2 under these conditions (By similarity).</text>
</comment>
<comment type="PTM">
    <text evidence="1">Ubiquitinated by MDM2. Doxorubicin treatment does not affect monoubiquitination, but slightly decreases HNRNPK poly-ubiquitination (By similarity).</text>
</comment>
<comment type="PTM">
    <text evidence="1">O-glycosylated (O-GlcNAcylated), in a cell cycle-dependent manner.</text>
</comment>
<gene>
    <name type="primary">Hnrnpk</name>
    <name type="synonym">Hnrpk</name>
</gene>
<feature type="chain" id="PRO_0000050097" description="Heterogeneous nuclear ribonucleoprotein K">
    <location>
        <begin position="1"/>
        <end position="463"/>
    </location>
</feature>
<feature type="domain" description="KH 1" evidence="4">
    <location>
        <begin position="42"/>
        <end position="104"/>
    </location>
</feature>
<feature type="repeat" description="1-1">
    <location>
        <begin position="54"/>
        <end position="76"/>
    </location>
</feature>
<feature type="repeat" description="3-1">
    <location>
        <begin position="59"/>
        <end position="62"/>
    </location>
</feature>
<feature type="domain" description="KH 2" evidence="4">
    <location>
        <begin position="144"/>
        <end position="209"/>
    </location>
</feature>
<feature type="repeat" description="2-1">
    <location>
        <begin position="245"/>
        <end position="250"/>
    </location>
</feature>
<feature type="repeat" description="3-2">
    <location>
        <begin position="257"/>
        <end position="260"/>
    </location>
</feature>
<feature type="repeat" description="3-3">
    <location>
        <begin position="267"/>
        <end position="270"/>
    </location>
</feature>
<feature type="repeat" description="3-4">
    <location>
        <begin position="295"/>
        <end position="298"/>
    </location>
</feature>
<feature type="repeat" description="2-2">
    <location>
        <begin position="324"/>
        <end position="329"/>
    </location>
</feature>
<feature type="domain" description="KH 3" evidence="4">
    <location>
        <begin position="387"/>
        <end position="451"/>
    </location>
</feature>
<feature type="repeat" description="1-2">
    <location>
        <begin position="399"/>
        <end position="421"/>
    </location>
</feature>
<feature type="repeat" description="3-5">
    <location>
        <begin position="404"/>
        <end position="407"/>
    </location>
</feature>
<feature type="region of interest" description="Necessary for interaction with DDX1" evidence="1">
    <location>
        <begin position="1"/>
        <end position="276"/>
    </location>
</feature>
<feature type="region of interest" description="Disordered" evidence="5">
    <location>
        <begin position="1"/>
        <end position="37"/>
    </location>
</feature>
<feature type="region of interest" description="2 X 22 AA approximate repeats">
    <location>
        <begin position="54"/>
        <end position="421"/>
    </location>
</feature>
<feature type="region of interest" description="5 X 4 AA repeats of G-X-G-G">
    <location>
        <begin position="59"/>
        <end position="407"/>
    </location>
</feature>
<feature type="region of interest" description="Interaction with ZIK1" evidence="9">
    <location>
        <begin position="209"/>
        <end position="337"/>
    </location>
</feature>
<feature type="region of interest" description="RNA-binding RGG-box">
    <location>
        <begin position="236"/>
        <end position="273"/>
    </location>
</feature>
<feature type="region of interest" description="2 X 6 AA approximate repeats">
    <location>
        <begin position="245"/>
        <end position="329"/>
    </location>
</feature>
<feature type="region of interest" description="Disordered" evidence="5">
    <location>
        <begin position="250"/>
        <end position="329"/>
    </location>
</feature>
<feature type="compositionally biased region" description="Basic and acidic residues" evidence="5">
    <location>
        <begin position="19"/>
        <end position="37"/>
    </location>
</feature>
<feature type="compositionally biased region" description="Low complexity" evidence="5">
    <location>
        <begin position="252"/>
        <end position="266"/>
    </location>
</feature>
<feature type="compositionally biased region" description="Basic and acidic residues" evidence="5">
    <location>
        <begin position="276"/>
        <end position="285"/>
    </location>
</feature>
<feature type="modified residue" description="N-acetylmethionine" evidence="2">
    <location>
        <position position="1"/>
    </location>
</feature>
<feature type="modified residue" description="N6-acetyllysine; alternate" evidence="17">
    <location>
        <position position="34"/>
    </location>
</feature>
<feature type="modified residue" description="Phosphoserine" evidence="2">
    <location>
        <position position="36"/>
    </location>
</feature>
<feature type="modified residue" description="Phosphothreonine" evidence="16">
    <location>
        <position position="39"/>
    </location>
</feature>
<feature type="modified residue" description="Phosphoserine" evidence="2">
    <location>
        <position position="75"/>
    </location>
</feature>
<feature type="modified residue" description="Phosphoserine" evidence="15">
    <location>
        <position position="116"/>
    </location>
</feature>
<feature type="modified residue" description="N6-acetyllysine" evidence="17">
    <location>
        <position position="198"/>
    </location>
</feature>
<feature type="modified residue" description="Phosphoserine" evidence="2">
    <location>
        <position position="214"/>
    </location>
</feature>
<feature type="modified residue" description="Phosphoserine" evidence="14 16">
    <location>
        <position position="216"/>
    </location>
</feature>
<feature type="modified residue" description="N6-succinyllysine; alternate" evidence="17">
    <location>
        <position position="219"/>
    </location>
</feature>
<feature type="modified residue" description="Phosphoserine" evidence="2">
    <location>
        <position position="284"/>
    </location>
</feature>
<feature type="modified residue" description="Omega-N-methylarginine" evidence="18">
    <location>
        <position position="316"/>
    </location>
</feature>
<feature type="modified residue" description="Omega-N-methylarginine" evidence="18">
    <location>
        <position position="377"/>
    </location>
</feature>
<feature type="modified residue" description="Phosphoserine" evidence="2">
    <location>
        <position position="379"/>
    </location>
</feature>
<feature type="modified residue" description="Phosphotyrosine" evidence="2">
    <location>
        <position position="380"/>
    </location>
</feature>
<feature type="modified residue" description="N6-acetyllysine; alternate" evidence="17">
    <location>
        <position position="405"/>
    </location>
</feature>
<feature type="modified residue" description="Phosphoserine" evidence="2">
    <location>
        <position position="420"/>
    </location>
</feature>
<feature type="cross-link" description="Glycyl lysine isopeptide (Lys-Gly) (interchain with G-Cter in SUMO1); alternate" evidence="2">
    <location>
        <position position="34"/>
    </location>
</feature>
<feature type="cross-link" description="Glycyl lysine isopeptide (Lys-Gly) (interchain with G-Cter in SUMO2); alternate" evidence="2">
    <location>
        <position position="34"/>
    </location>
</feature>
<feature type="cross-link" description="Glycyl lysine isopeptide (Lys-Gly) (interchain with G-Cter in SUMO2)" evidence="2">
    <location>
        <position position="52"/>
    </location>
</feature>
<feature type="cross-link" description="Glycyl lysine isopeptide (Lys-Gly) (interchain with G-Cter in SUMO2)" evidence="2">
    <location>
        <position position="60"/>
    </location>
</feature>
<feature type="cross-link" description="Glycyl lysine isopeptide (Lys-Gly) (interchain with G-Cter in SUMO1); alternate" evidence="2">
    <location>
        <position position="163"/>
    </location>
</feature>
<feature type="cross-link" description="Glycyl lysine isopeptide (Lys-Gly) (interchain with G-Cter in SUMO2); alternate" evidence="2">
    <location>
        <position position="163"/>
    </location>
</feature>
<feature type="cross-link" description="Glycyl lysine isopeptide (Lys-Gly) (interchain with G-Cter in SUMO2); alternate" evidence="2">
    <location>
        <position position="219"/>
    </location>
</feature>
<feature type="cross-link" description="Glycyl lysine isopeptide (Lys-Gly) (interchain with G-Cter in SUMO2); alternate" evidence="2">
    <location>
        <position position="405"/>
    </location>
</feature>
<feature type="cross-link" description="Glycyl lysine isopeptide (Lys-Gly) (interchain with G-Cter in SUMO); alternate" evidence="1">
    <location>
        <position position="422"/>
    </location>
</feature>
<feature type="cross-link" description="Glycyl lysine isopeptide (Lys-Gly) (interchain with G-Cter in SUMO1); alternate" evidence="2">
    <location>
        <position position="422"/>
    </location>
</feature>
<feature type="cross-link" description="Glycyl lysine isopeptide (Lys-Gly) (interchain with G-Cter in SUMO2); alternate" evidence="2">
    <location>
        <position position="422"/>
    </location>
</feature>
<feature type="splice variant" id="VSP_012581" description="In isoform 3." evidence="11">
    <location>
        <begin position="111"/>
        <end position="134"/>
    </location>
</feature>
<feature type="splice variant" id="VSP_010622" description="In isoform 2." evidence="10 11 12">
    <original>SGKFF</original>
    <variation>ADVEGF</variation>
    <location>
        <begin position="459"/>
        <end position="463"/>
    </location>
</feature>
<feature type="sequence conflict" description="In Ref. 1; AAA21731." evidence="13" ref="1">
    <original>C</original>
    <variation>V</variation>
    <location>
        <position position="132"/>
    </location>
</feature>
<feature type="sequence conflict" description="In Ref. 1; AAA21731." evidence="13" ref="1">
    <original>Q</original>
    <variation>P</variation>
    <location>
        <position position="136"/>
    </location>
</feature>
<feature type="sequence conflict" description="In Ref. 1; AAA21731." evidence="13" ref="1">
    <original>S</original>
    <variation>T</variation>
    <location>
        <position position="154"/>
    </location>
</feature>
<feature type="sequence conflict" description="In Ref. 1; AAA21731." evidence="13" ref="1">
    <original>D</original>
    <variation>S</variation>
    <location>
        <position position="334"/>
    </location>
</feature>
<feature type="sequence conflict" description="In Ref. 1; AAA21731." evidence="13" ref="1">
    <original>D</original>
    <variation>E</variation>
    <location>
        <position position="350"/>
    </location>
</feature>
<organism>
    <name type="scientific">Mus musculus</name>
    <name type="common">Mouse</name>
    <dbReference type="NCBI Taxonomy" id="10090"/>
    <lineage>
        <taxon>Eukaryota</taxon>
        <taxon>Metazoa</taxon>
        <taxon>Chordata</taxon>
        <taxon>Craniata</taxon>
        <taxon>Vertebrata</taxon>
        <taxon>Euteleostomi</taxon>
        <taxon>Mammalia</taxon>
        <taxon>Eutheria</taxon>
        <taxon>Euarchontoglires</taxon>
        <taxon>Glires</taxon>
        <taxon>Rodentia</taxon>
        <taxon>Myomorpha</taxon>
        <taxon>Muroidea</taxon>
        <taxon>Muridae</taxon>
        <taxon>Murinae</taxon>
        <taxon>Mus</taxon>
        <taxon>Mus</taxon>
    </lineage>
</organism>
<sequence>METEQPEETFPNTETNGEFGKRPAEDMEEEQAFKRSRNTDEMVELRILLQSKNAGAVIGKGGKNIKALRTDYNASVSVPDSSGPERILSISADIETIGEILKKIIPTLEEGLQLPSPTATSQLPLESDAVECLNYQHYKGSDFDCELRLLIHQSLAGGIIGVKGAKIKELRENTQTTIKLFQECCPHSTDRVVLIGGKPDRVVECIKIILDLISESPIKGRAQPYDPNFYDETYDYGGFTMMFDDRRGRPVGFPMRGRGGFDRMPPGRGGRPMPPSRRDYDDMSPRRGPPPPPPGRGGRGGSRARNLPLPPPPPPRGGDLMAYDRRGRPGDRYDGMVGFSADETWDSAIDTWSPSEWQMAYEPQGGSGYDYSYAGGRGSYGDLGGPIITTQVTIPKDLAGSIIGKGGQRIKQIRHESGASIKIDEPLEGSEDRIITITGTQDQIQNAQYLLQNSVKQYSGKFF</sequence>
<protein>
    <recommendedName>
        <fullName>Heterogeneous nuclear ribonucleoprotein K</fullName>
        <shortName>hnRNP K</shortName>
    </recommendedName>
</protein>
<keyword id="KW-0007">Acetylation</keyword>
<keyword id="KW-0010">Activator</keyword>
<keyword id="KW-0025">Alternative splicing</keyword>
<keyword id="KW-0965">Cell junction</keyword>
<keyword id="KW-0966">Cell projection</keyword>
<keyword id="KW-0963">Cytoplasm</keyword>
<keyword id="KW-0903">Direct protein sequencing</keyword>
<keyword id="KW-0238">DNA-binding</keyword>
<keyword id="KW-0325">Glycoprotein</keyword>
<keyword id="KW-1017">Isopeptide bond</keyword>
<keyword id="KW-0488">Methylation</keyword>
<keyword id="KW-0507">mRNA processing</keyword>
<keyword id="KW-0508">mRNA splicing</keyword>
<keyword id="KW-0539">Nucleus</keyword>
<keyword id="KW-0597">Phosphoprotein</keyword>
<keyword id="KW-1185">Reference proteome</keyword>
<keyword id="KW-0677">Repeat</keyword>
<keyword id="KW-0678">Repressor</keyword>
<keyword id="KW-0687">Ribonucleoprotein</keyword>
<keyword id="KW-0694">RNA-binding</keyword>
<keyword id="KW-0747">Spliceosome</keyword>
<keyword id="KW-0804">Transcription</keyword>
<keyword id="KW-0805">Transcription regulation</keyword>
<keyword id="KW-0832">Ubl conjugation</keyword>
<accession>P61979</accession>
<accession>Q07244</accession>
<accession>Q15671</accession>
<accession>Q60577</accession>
<accession>Q8BGQ8</accession>
<accession>Q922Y7</accession>
<accession>Q96J62</accession>
<reference key="1">
    <citation type="journal article" date="1994" name="J. Biol. Chem.">
        <title>Purification, cloning, and expression of a murine phosphoprotein that binds the kappa B motif in vitro identifies it as the homolog of the human heterogeneous nuclear ribonucleoprotein K protein. Description of a novel DNA-dependent phosphorylation process.</title>
        <authorList>
            <person name="Ostrowski J."/>
            <person name="van Seuningen I."/>
            <person name="Seger R."/>
            <person name="Rauch C.T."/>
            <person name="Sleath P.R."/>
            <person name="McMullen B.A."/>
            <person name="Bomsztyk K."/>
        </authorList>
    </citation>
    <scope>NUCLEOTIDE SEQUENCE [MRNA] (ISOFORM 2)</scope>
    <scope>PARTIAL PROTEIN SEQUENCE</scope>
    <source>
        <tissue>Lymphoma</tissue>
    </source>
</reference>
<reference key="2">
    <citation type="journal article" date="2005" name="Science">
        <title>The transcriptional landscape of the mammalian genome.</title>
        <authorList>
            <person name="Carninci P."/>
            <person name="Kasukawa T."/>
            <person name="Katayama S."/>
            <person name="Gough J."/>
            <person name="Frith M.C."/>
            <person name="Maeda N."/>
            <person name="Oyama R."/>
            <person name="Ravasi T."/>
            <person name="Lenhard B."/>
            <person name="Wells C."/>
            <person name="Kodzius R."/>
            <person name="Shimokawa K."/>
            <person name="Bajic V.B."/>
            <person name="Brenner S.E."/>
            <person name="Batalov S."/>
            <person name="Forrest A.R."/>
            <person name="Zavolan M."/>
            <person name="Davis M.J."/>
            <person name="Wilming L.G."/>
            <person name="Aidinis V."/>
            <person name="Allen J.E."/>
            <person name="Ambesi-Impiombato A."/>
            <person name="Apweiler R."/>
            <person name="Aturaliya R.N."/>
            <person name="Bailey T.L."/>
            <person name="Bansal M."/>
            <person name="Baxter L."/>
            <person name="Beisel K.W."/>
            <person name="Bersano T."/>
            <person name="Bono H."/>
            <person name="Chalk A.M."/>
            <person name="Chiu K.P."/>
            <person name="Choudhary V."/>
            <person name="Christoffels A."/>
            <person name="Clutterbuck D.R."/>
            <person name="Crowe M.L."/>
            <person name="Dalla E."/>
            <person name="Dalrymple B.P."/>
            <person name="de Bono B."/>
            <person name="Della Gatta G."/>
            <person name="di Bernardo D."/>
            <person name="Down T."/>
            <person name="Engstrom P."/>
            <person name="Fagiolini M."/>
            <person name="Faulkner G."/>
            <person name="Fletcher C.F."/>
            <person name="Fukushima T."/>
            <person name="Furuno M."/>
            <person name="Futaki S."/>
            <person name="Gariboldi M."/>
            <person name="Georgii-Hemming P."/>
            <person name="Gingeras T.R."/>
            <person name="Gojobori T."/>
            <person name="Green R.E."/>
            <person name="Gustincich S."/>
            <person name="Harbers M."/>
            <person name="Hayashi Y."/>
            <person name="Hensch T.K."/>
            <person name="Hirokawa N."/>
            <person name="Hill D."/>
            <person name="Huminiecki L."/>
            <person name="Iacono M."/>
            <person name="Ikeo K."/>
            <person name="Iwama A."/>
            <person name="Ishikawa T."/>
            <person name="Jakt M."/>
            <person name="Kanapin A."/>
            <person name="Katoh M."/>
            <person name="Kawasawa Y."/>
            <person name="Kelso J."/>
            <person name="Kitamura H."/>
            <person name="Kitano H."/>
            <person name="Kollias G."/>
            <person name="Krishnan S.P."/>
            <person name="Kruger A."/>
            <person name="Kummerfeld S.K."/>
            <person name="Kurochkin I.V."/>
            <person name="Lareau L.F."/>
            <person name="Lazarevic D."/>
            <person name="Lipovich L."/>
            <person name="Liu J."/>
            <person name="Liuni S."/>
            <person name="McWilliam S."/>
            <person name="Madan Babu M."/>
            <person name="Madera M."/>
            <person name="Marchionni L."/>
            <person name="Matsuda H."/>
            <person name="Matsuzawa S."/>
            <person name="Miki H."/>
            <person name="Mignone F."/>
            <person name="Miyake S."/>
            <person name="Morris K."/>
            <person name="Mottagui-Tabar S."/>
            <person name="Mulder N."/>
            <person name="Nakano N."/>
            <person name="Nakauchi H."/>
            <person name="Ng P."/>
            <person name="Nilsson R."/>
            <person name="Nishiguchi S."/>
            <person name="Nishikawa S."/>
            <person name="Nori F."/>
            <person name="Ohara O."/>
            <person name="Okazaki Y."/>
            <person name="Orlando V."/>
            <person name="Pang K.C."/>
            <person name="Pavan W.J."/>
            <person name="Pavesi G."/>
            <person name="Pesole G."/>
            <person name="Petrovsky N."/>
            <person name="Piazza S."/>
            <person name="Reed J."/>
            <person name="Reid J.F."/>
            <person name="Ring B.Z."/>
            <person name="Ringwald M."/>
            <person name="Rost B."/>
            <person name="Ruan Y."/>
            <person name="Salzberg S.L."/>
            <person name="Sandelin A."/>
            <person name="Schneider C."/>
            <person name="Schoenbach C."/>
            <person name="Sekiguchi K."/>
            <person name="Semple C.A."/>
            <person name="Seno S."/>
            <person name="Sessa L."/>
            <person name="Sheng Y."/>
            <person name="Shibata Y."/>
            <person name="Shimada H."/>
            <person name="Shimada K."/>
            <person name="Silva D."/>
            <person name="Sinclair B."/>
            <person name="Sperling S."/>
            <person name="Stupka E."/>
            <person name="Sugiura K."/>
            <person name="Sultana R."/>
            <person name="Takenaka Y."/>
            <person name="Taki K."/>
            <person name="Tammoja K."/>
            <person name="Tan S.L."/>
            <person name="Tang S."/>
            <person name="Taylor M.S."/>
            <person name="Tegner J."/>
            <person name="Teichmann S.A."/>
            <person name="Ueda H.R."/>
            <person name="van Nimwegen E."/>
            <person name="Verardo R."/>
            <person name="Wei C.L."/>
            <person name="Yagi K."/>
            <person name="Yamanishi H."/>
            <person name="Zabarovsky E."/>
            <person name="Zhu S."/>
            <person name="Zimmer A."/>
            <person name="Hide W."/>
            <person name="Bult C."/>
            <person name="Grimmond S.M."/>
            <person name="Teasdale R.D."/>
            <person name="Liu E.T."/>
            <person name="Brusic V."/>
            <person name="Quackenbush J."/>
            <person name="Wahlestedt C."/>
            <person name="Mattick J.S."/>
            <person name="Hume D.A."/>
            <person name="Kai C."/>
            <person name="Sasaki D."/>
            <person name="Tomaru Y."/>
            <person name="Fukuda S."/>
            <person name="Kanamori-Katayama M."/>
            <person name="Suzuki M."/>
            <person name="Aoki J."/>
            <person name="Arakawa T."/>
            <person name="Iida J."/>
            <person name="Imamura K."/>
            <person name="Itoh M."/>
            <person name="Kato T."/>
            <person name="Kawaji H."/>
            <person name="Kawagashira N."/>
            <person name="Kawashima T."/>
            <person name="Kojima M."/>
            <person name="Kondo S."/>
            <person name="Konno H."/>
            <person name="Nakano K."/>
            <person name="Ninomiya N."/>
            <person name="Nishio T."/>
            <person name="Okada M."/>
            <person name="Plessy C."/>
            <person name="Shibata K."/>
            <person name="Shiraki T."/>
            <person name="Suzuki S."/>
            <person name="Tagami M."/>
            <person name="Waki K."/>
            <person name="Watahiki A."/>
            <person name="Okamura-Oho Y."/>
            <person name="Suzuki H."/>
            <person name="Kawai J."/>
            <person name="Hayashizaki Y."/>
        </authorList>
    </citation>
    <scope>NUCLEOTIDE SEQUENCE [LARGE SCALE MRNA] (ISOFORMS 1; 2 AND 3)</scope>
    <source>
        <strain>C57BL/6J</strain>
        <strain>NOD</strain>
        <tissue>Spinal ganglion</tissue>
        <tissue>Testis</tissue>
        <tissue>Thymus</tissue>
    </source>
</reference>
<reference key="3">
    <citation type="journal article" date="2004" name="Genome Res.">
        <title>The status, quality, and expansion of the NIH full-length cDNA project: the Mammalian Gene Collection (MGC).</title>
        <authorList>
            <consortium name="The MGC Project Team"/>
        </authorList>
    </citation>
    <scope>NUCLEOTIDE SEQUENCE [LARGE SCALE MRNA] (ISOFORM 2)</scope>
</reference>
<reference key="4">
    <citation type="submission" date="2007-07" db="UniProtKB">
        <authorList>
            <person name="Lubec G."/>
            <person name="Klug S."/>
            <person name="Yang J.W."/>
            <person name="Zigmond M."/>
        </authorList>
    </citation>
    <scope>PROTEIN SEQUENCE OF 149-163 AND 207-219</scope>
    <scope>IDENTIFICATION BY MASS SPECTROMETRY</scope>
    <source>
        <tissue>Brain</tissue>
        <tissue>Hippocampus</tissue>
    </source>
</reference>
<reference key="5">
    <citation type="journal article" date="1996" name="J. Biol. Chem.">
        <title>Zik1, a transcriptional repressor that interacts with the heterogeneous nuclear ribonucleoprotein particle K protein.</title>
        <authorList>
            <person name="Denisenko O.N."/>
            <person name="O'Neill B."/>
            <person name="Ostrowski J."/>
            <person name="Van Seuningen I."/>
            <person name="Bomsztyk K."/>
        </authorList>
    </citation>
    <scope>INTERACTION WITH ZIK1</scope>
</reference>
<reference key="6">
    <citation type="journal article" date="2005" name="Cell">
        <title>hnRNP K: an HDM2 target and transcriptional coactivator of p53 in response to DNA damage.</title>
        <authorList>
            <person name="Moumen A."/>
            <person name="Masterson P."/>
            <person name="O'Connor M.J."/>
            <person name="Jackson S.P."/>
        </authorList>
    </citation>
    <scope>INDUCTION</scope>
</reference>
<reference key="7">
    <citation type="journal article" date="2009" name="Immunity">
        <title>The phagosomal proteome in interferon-gamma-activated macrophages.</title>
        <authorList>
            <person name="Trost M."/>
            <person name="English L."/>
            <person name="Lemieux S."/>
            <person name="Courcelles M."/>
            <person name="Desjardins M."/>
            <person name="Thibault P."/>
        </authorList>
    </citation>
    <scope>PHOSPHORYLATION [LARGE SCALE ANALYSIS] AT SER-116</scope>
    <scope>IDENTIFICATION BY MASS SPECTROMETRY [LARGE SCALE ANALYSIS]</scope>
</reference>
<reference key="8">
    <citation type="journal article" date="2009" name="Mol. Cell. Proteomics">
        <title>Large scale localization of protein phosphorylation by use of electron capture dissociation mass spectrometry.</title>
        <authorList>
            <person name="Sweet S.M."/>
            <person name="Bailey C.M."/>
            <person name="Cunningham D.L."/>
            <person name="Heath J.K."/>
            <person name="Cooper H.J."/>
        </authorList>
    </citation>
    <scope>PHOSPHORYLATION [LARGE SCALE ANALYSIS] AT SER-216</scope>
    <scope>IDENTIFICATION BY MASS SPECTROMETRY [LARGE SCALE ANALYSIS]</scope>
    <source>
        <tissue>Embryonic fibroblast</tissue>
    </source>
</reference>
<reference key="9">
    <citation type="journal article" date="2010" name="Cell">
        <title>A large intergenic noncoding RNA induced by p53 mediates global gene repression in the p53 response.</title>
        <authorList>
            <person name="Huarte M."/>
            <person name="Guttman M."/>
            <person name="Feldser D."/>
            <person name="Garber M."/>
            <person name="Koziol M.J."/>
            <person name="Kenzelmann-Broz D."/>
            <person name="Khalil A.M."/>
            <person name="Zuk O."/>
            <person name="Amit I."/>
            <person name="Rabani M."/>
            <person name="Attardi L.D."/>
            <person name="Regev A."/>
            <person name="Lander E.S."/>
            <person name="Jacks T."/>
            <person name="Rinn J.L."/>
        </authorList>
    </citation>
    <scope>FUNCTION</scope>
</reference>
<reference key="10">
    <citation type="journal article" date="2010" name="Cell">
        <title>A tissue-specific atlas of mouse protein phosphorylation and expression.</title>
        <authorList>
            <person name="Huttlin E.L."/>
            <person name="Jedrychowski M.P."/>
            <person name="Elias J.E."/>
            <person name="Goswami T."/>
            <person name="Rad R."/>
            <person name="Beausoleil S.A."/>
            <person name="Villen J."/>
            <person name="Haas W."/>
            <person name="Sowa M.E."/>
            <person name="Gygi S.P."/>
        </authorList>
    </citation>
    <scope>PHOSPHORYLATION [LARGE SCALE ANALYSIS] AT THR-39 AND SER-216</scope>
    <scope>IDENTIFICATION BY MASS SPECTROMETRY [LARGE SCALE ANALYSIS]</scope>
    <source>
        <tissue>Brain</tissue>
        <tissue>Brown adipose tissue</tissue>
        <tissue>Heart</tissue>
        <tissue>Kidney</tissue>
        <tissue>Liver</tissue>
        <tissue>Lung</tissue>
        <tissue>Pancreas</tissue>
        <tissue>Spleen</tissue>
        <tissue>Testis</tissue>
    </source>
</reference>
<reference key="11">
    <citation type="journal article" date="2012" name="Nucleic Acids Res.">
        <title>The testis-specific double bromodomain-containing protein BRDT forms a complex with multiple spliceosome components and is required for mRNA splicing and 3'-UTR truncation in round spermatids.</title>
        <authorList>
            <person name="Berkovits B.D."/>
            <person name="Wang L."/>
            <person name="Guarnieri P."/>
            <person name="Wolgemuth D.J."/>
        </authorList>
    </citation>
    <scope>INTERACTION WITH BRDT</scope>
</reference>
<reference key="12">
    <citation type="journal article" date="2013" name="Mol. Cell">
        <title>SIRT5-mediated lysine desuccinylation impacts diverse metabolic pathways.</title>
        <authorList>
            <person name="Park J."/>
            <person name="Chen Y."/>
            <person name="Tishkoff D.X."/>
            <person name="Peng C."/>
            <person name="Tan M."/>
            <person name="Dai L."/>
            <person name="Xie Z."/>
            <person name="Zhang Y."/>
            <person name="Zwaans B.M."/>
            <person name="Skinner M.E."/>
            <person name="Lombard D.B."/>
            <person name="Zhao Y."/>
        </authorList>
    </citation>
    <scope>ACETYLATION [LARGE SCALE ANALYSIS] AT LYS-34; LYS-198 AND LYS-405</scope>
    <scope>SUCCINYLATION [LARGE SCALE ANALYSIS] AT LYS-219</scope>
    <scope>IDENTIFICATION BY MASS SPECTROMETRY [LARGE SCALE ANALYSIS]</scope>
    <source>
        <tissue>Embryonic fibroblast</tissue>
    </source>
</reference>
<reference key="13">
    <citation type="journal article" date="2014" name="Mol. Cell. Proteomics">
        <title>Immunoaffinity enrichment and mass spectrometry analysis of protein methylation.</title>
        <authorList>
            <person name="Guo A."/>
            <person name="Gu H."/>
            <person name="Zhou J."/>
            <person name="Mulhern D."/>
            <person name="Wang Y."/>
            <person name="Lee K.A."/>
            <person name="Yang V."/>
            <person name="Aguiar M."/>
            <person name="Kornhauser J."/>
            <person name="Jia X."/>
            <person name="Ren J."/>
            <person name="Beausoleil S.A."/>
            <person name="Silva J.C."/>
            <person name="Vemulapalli V."/>
            <person name="Bedford M.T."/>
            <person name="Comb M.J."/>
        </authorList>
    </citation>
    <scope>METHYLATION [LARGE SCALE ANALYSIS] AT ARG-316 AND ARG-377</scope>
    <scope>IDENTIFICATION BY MASS SPECTROMETRY [LARGE SCALE ANALYSIS]</scope>
    <source>
        <tissue>Brain</tissue>
        <tissue>Embryo</tissue>
    </source>
</reference>
<dbReference type="EMBL" id="L31961">
    <property type="protein sequence ID" value="AAA21731.1"/>
    <property type="molecule type" value="mRNA"/>
</dbReference>
<dbReference type="EMBL" id="AK011428">
    <property type="protein sequence ID" value="BAB27614.1"/>
    <property type="molecule type" value="mRNA"/>
</dbReference>
<dbReference type="EMBL" id="AK051313">
    <property type="protein sequence ID" value="BAC34601.1"/>
    <property type="molecule type" value="mRNA"/>
</dbReference>
<dbReference type="EMBL" id="AK078777">
    <property type="protein sequence ID" value="BAC37389.1"/>
    <property type="molecule type" value="mRNA"/>
</dbReference>
<dbReference type="EMBL" id="AK088462">
    <property type="protein sequence ID" value="BAC40368.1"/>
    <property type="molecule type" value="mRNA"/>
</dbReference>
<dbReference type="EMBL" id="BC006694">
    <property type="protein sequence ID" value="AAH06694.1"/>
    <property type="molecule type" value="mRNA"/>
</dbReference>
<dbReference type="CCDS" id="CCDS49283.1"/>
<dbReference type="CCDS" id="CCDS79197.1">
    <molecule id="P61979-3"/>
</dbReference>
<dbReference type="CCDS" id="CCDS79199.1">
    <molecule id="P61979-2"/>
</dbReference>
<dbReference type="RefSeq" id="NP_001288269.1">
    <molecule id="P61979-2"/>
    <property type="nucleotide sequence ID" value="NM_001301340.1"/>
</dbReference>
<dbReference type="RefSeq" id="NP_001288270.1">
    <molecule id="P61979-2"/>
    <property type="nucleotide sequence ID" value="NM_001301341.1"/>
</dbReference>
<dbReference type="RefSeq" id="NP_001288272.1">
    <molecule id="P61979-2"/>
    <property type="nucleotide sequence ID" value="NM_001301343.1"/>
</dbReference>
<dbReference type="RefSeq" id="NP_001288273.1">
    <property type="nucleotide sequence ID" value="NM_001301344.1"/>
</dbReference>
<dbReference type="RefSeq" id="NP_001288274.1">
    <molecule id="P61979-3"/>
    <property type="nucleotide sequence ID" value="NM_001301345.1"/>
</dbReference>
<dbReference type="RefSeq" id="NP_001347419.1">
    <molecule id="P61979-1"/>
    <property type="nucleotide sequence ID" value="NM_001360490.1"/>
</dbReference>
<dbReference type="RefSeq" id="NP_001347424.1">
    <molecule id="P61979-3"/>
    <property type="nucleotide sequence ID" value="NM_001360495.1"/>
</dbReference>
<dbReference type="RefSeq" id="NP_079555.1">
    <molecule id="P61979-1"/>
    <property type="nucleotide sequence ID" value="NM_025279.3"/>
</dbReference>
<dbReference type="RefSeq" id="XP_006517166.1">
    <molecule id="P61979-2"/>
    <property type="nucleotide sequence ID" value="XM_006517103.5"/>
</dbReference>
<dbReference type="RefSeq" id="XP_006517167.1">
    <molecule id="P61979-2"/>
    <property type="nucleotide sequence ID" value="XM_006517104.4"/>
</dbReference>
<dbReference type="RefSeq" id="XP_017170884.1">
    <property type="nucleotide sequence ID" value="XM_017315395.1"/>
</dbReference>
<dbReference type="RefSeq" id="XP_017170885.1">
    <property type="nucleotide sequence ID" value="XM_017315396.1"/>
</dbReference>
<dbReference type="SMR" id="P61979"/>
<dbReference type="BioGRID" id="200359">
    <property type="interactions" value="266"/>
</dbReference>
<dbReference type="FunCoup" id="P61979">
    <property type="interactions" value="4340"/>
</dbReference>
<dbReference type="IntAct" id="P61979">
    <property type="interactions" value="16"/>
</dbReference>
<dbReference type="MINT" id="P61979"/>
<dbReference type="STRING" id="10090.ENSMUSP00000112104"/>
<dbReference type="GlyGen" id="P61979">
    <property type="glycosylation" value="4 sites, 1 N-linked glycan (1 site), 1 O-linked glycan (1 site)"/>
</dbReference>
<dbReference type="iPTMnet" id="P61979"/>
<dbReference type="PhosphoSitePlus" id="P61979"/>
<dbReference type="SwissPalm" id="P61979"/>
<dbReference type="REPRODUCTION-2DPAGE" id="IPI00223253"/>
<dbReference type="REPRODUCTION-2DPAGE" id="P61979"/>
<dbReference type="jPOST" id="P61979"/>
<dbReference type="PaxDb" id="10090-ENSMUSP00000039269"/>
<dbReference type="PeptideAtlas" id="P61979"/>
<dbReference type="ProteomicsDB" id="269620"/>
<dbReference type="ProteomicsDB" id="269621">
    <molecule id="P61979-2"/>
</dbReference>
<dbReference type="ProteomicsDB" id="269622">
    <molecule id="P61979-3"/>
</dbReference>
<dbReference type="Pumba" id="P61979"/>
<dbReference type="Antibodypedia" id="2214">
    <property type="antibodies" value="622 antibodies from 41 providers"/>
</dbReference>
<dbReference type="DNASU" id="15387"/>
<dbReference type="Ensembl" id="ENSMUST00000043269.14">
    <molecule id="P61979-1"/>
    <property type="protein sequence ID" value="ENSMUSP00000039269.8"/>
    <property type="gene ID" value="ENSMUSG00000021546.19"/>
</dbReference>
<dbReference type="Ensembl" id="ENSMUST00000116403.9">
    <molecule id="P61979-2"/>
    <property type="protein sequence ID" value="ENSMUSP00000112104.3"/>
    <property type="gene ID" value="ENSMUSG00000021546.19"/>
</dbReference>
<dbReference type="Ensembl" id="ENSMUST00000176207.8">
    <molecule id="P61979-3"/>
    <property type="protein sequence ID" value="ENSMUSP00000135354.2"/>
    <property type="gene ID" value="ENSMUSG00000021546.19"/>
</dbReference>
<dbReference type="Ensembl" id="ENSMUST00000224182.2">
    <molecule id="P61979-2"/>
    <property type="protein sequence ID" value="ENSMUSP00000153253.2"/>
    <property type="gene ID" value="ENSMUSG00000021546.19"/>
</dbReference>
<dbReference type="Ensembl" id="ENSMUST00000225674.2">
    <molecule id="P61979-2"/>
    <property type="protein sequence ID" value="ENSMUSP00000152935.2"/>
    <property type="gene ID" value="ENSMUSG00000021546.19"/>
</dbReference>
<dbReference type="GeneID" id="15387"/>
<dbReference type="KEGG" id="mmu:15387"/>
<dbReference type="UCSC" id="uc007qtx.2">
    <property type="organism name" value="mouse"/>
</dbReference>
<dbReference type="UCSC" id="uc007qty.2">
    <molecule id="P61979-3"/>
    <property type="organism name" value="mouse"/>
</dbReference>
<dbReference type="AGR" id="MGI:99894"/>
<dbReference type="CTD" id="3190"/>
<dbReference type="MGI" id="MGI:99894">
    <property type="gene designation" value="Hnrnpk"/>
</dbReference>
<dbReference type="VEuPathDB" id="HostDB:ENSMUSG00000021546"/>
<dbReference type="eggNOG" id="KOG2192">
    <property type="taxonomic scope" value="Eukaryota"/>
</dbReference>
<dbReference type="GeneTree" id="ENSGT00940000153434"/>
<dbReference type="InParanoid" id="P61979"/>
<dbReference type="OMA" id="KALRTDX"/>
<dbReference type="OrthoDB" id="1937934at2759"/>
<dbReference type="TreeFam" id="TF316335"/>
<dbReference type="Reactome" id="R-MMU-4570464">
    <property type="pathway name" value="SUMOylation of RNA binding proteins"/>
</dbReference>
<dbReference type="Reactome" id="R-MMU-72163">
    <property type="pathway name" value="mRNA Splicing - Major Pathway"/>
</dbReference>
<dbReference type="Reactome" id="R-MMU-72203">
    <property type="pathway name" value="Processing of Capped Intron-Containing Pre-mRNA"/>
</dbReference>
<dbReference type="BioGRID-ORCS" id="15387">
    <property type="hits" value="27 hits in 81 CRISPR screens"/>
</dbReference>
<dbReference type="CD-CODE" id="CE726F99">
    <property type="entry name" value="Postsynaptic density"/>
</dbReference>
<dbReference type="ChiTaRS" id="Hnrnpk">
    <property type="organism name" value="mouse"/>
</dbReference>
<dbReference type="PRO" id="PR:P61979"/>
<dbReference type="Proteomes" id="UP000000589">
    <property type="component" value="Chromosome 13"/>
</dbReference>
<dbReference type="RNAct" id="P61979">
    <property type="molecule type" value="protein"/>
</dbReference>
<dbReference type="Bgee" id="ENSMUSG00000021546">
    <property type="expression patterns" value="Expressed in embryonic post-anal tail and 76 other cell types or tissues"/>
</dbReference>
<dbReference type="ExpressionAtlas" id="P61979">
    <property type="expression patterns" value="baseline and differential"/>
</dbReference>
<dbReference type="GO" id="GO:0070161">
    <property type="term" value="C:anchoring junction"/>
    <property type="evidence" value="ECO:0007669"/>
    <property type="project" value="UniProtKB-KW"/>
</dbReference>
<dbReference type="GO" id="GO:0071013">
    <property type="term" value="C:catalytic step 2 spliceosome"/>
    <property type="evidence" value="ECO:0007669"/>
    <property type="project" value="Ensembl"/>
</dbReference>
<dbReference type="GO" id="GO:0042995">
    <property type="term" value="C:cell projection"/>
    <property type="evidence" value="ECO:0007669"/>
    <property type="project" value="UniProtKB-KW"/>
</dbReference>
<dbReference type="GO" id="GO:0000785">
    <property type="term" value="C:chromatin"/>
    <property type="evidence" value="ECO:0000250"/>
    <property type="project" value="UniProtKB"/>
</dbReference>
<dbReference type="GO" id="GO:0005737">
    <property type="term" value="C:cytoplasm"/>
    <property type="evidence" value="ECO:0000250"/>
    <property type="project" value="UniProtKB"/>
</dbReference>
<dbReference type="GO" id="GO:0010494">
    <property type="term" value="C:cytoplasmic stress granule"/>
    <property type="evidence" value="ECO:0000314"/>
    <property type="project" value="ARUK-UCL"/>
</dbReference>
<dbReference type="GO" id="GO:0005654">
    <property type="term" value="C:nucleoplasm"/>
    <property type="evidence" value="ECO:0007669"/>
    <property type="project" value="UniProtKB-SubCell"/>
</dbReference>
<dbReference type="GO" id="GO:0005634">
    <property type="term" value="C:nucleus"/>
    <property type="evidence" value="ECO:0000250"/>
    <property type="project" value="UniProtKB"/>
</dbReference>
<dbReference type="GO" id="GO:0002102">
    <property type="term" value="C:podosome"/>
    <property type="evidence" value="ECO:0007669"/>
    <property type="project" value="UniProtKB-SubCell"/>
</dbReference>
<dbReference type="GO" id="GO:1990904">
    <property type="term" value="C:ribonucleoprotein complex"/>
    <property type="evidence" value="ECO:0000250"/>
    <property type="project" value="UniProtKB"/>
</dbReference>
<dbReference type="GO" id="GO:0003677">
    <property type="term" value="F:DNA binding"/>
    <property type="evidence" value="ECO:0007669"/>
    <property type="project" value="UniProtKB-KW"/>
</dbReference>
<dbReference type="GO" id="GO:0042802">
    <property type="term" value="F:identical protein binding"/>
    <property type="evidence" value="ECO:0007669"/>
    <property type="project" value="Ensembl"/>
</dbReference>
<dbReference type="GO" id="GO:0019904">
    <property type="term" value="F:protein domain specific binding"/>
    <property type="evidence" value="ECO:0007669"/>
    <property type="project" value="Ensembl"/>
</dbReference>
<dbReference type="GO" id="GO:0003723">
    <property type="term" value="F:RNA binding"/>
    <property type="evidence" value="ECO:0000314"/>
    <property type="project" value="MGI"/>
</dbReference>
<dbReference type="GO" id="GO:0006397">
    <property type="term" value="P:mRNA processing"/>
    <property type="evidence" value="ECO:0007669"/>
    <property type="project" value="UniProtKB-KW"/>
</dbReference>
<dbReference type="GO" id="GO:0043066">
    <property type="term" value="P:negative regulation of apoptotic process"/>
    <property type="evidence" value="ECO:0000266"/>
    <property type="project" value="MGI"/>
</dbReference>
<dbReference type="GO" id="GO:0045892">
    <property type="term" value="P:negative regulation of DNA-templated transcription"/>
    <property type="evidence" value="ECO:0000250"/>
    <property type="project" value="UniProtKB"/>
</dbReference>
<dbReference type="GO" id="GO:0048025">
    <property type="term" value="P:negative regulation of mRNA splicing, via spliceosome"/>
    <property type="evidence" value="ECO:0000315"/>
    <property type="project" value="MGI"/>
</dbReference>
<dbReference type="GO" id="GO:0048260">
    <property type="term" value="P:positive regulation of receptor-mediated endocytosis"/>
    <property type="evidence" value="ECO:0007669"/>
    <property type="project" value="Ensembl"/>
</dbReference>
<dbReference type="GO" id="GO:0045944">
    <property type="term" value="P:positive regulation of transcription by RNA polymerase II"/>
    <property type="evidence" value="ECO:0000316"/>
    <property type="project" value="MGI"/>
</dbReference>
<dbReference type="GO" id="GO:0060816">
    <property type="term" value="P:random inactivation of X chromosome"/>
    <property type="evidence" value="ECO:0007669"/>
    <property type="project" value="Ensembl"/>
</dbReference>
<dbReference type="GO" id="GO:1902165">
    <property type="term" value="P:regulation of intrinsic apoptotic signaling pathway in response to DNA damage by p53 class mediator"/>
    <property type="evidence" value="ECO:0000315"/>
    <property type="project" value="MGI"/>
</dbReference>
<dbReference type="GO" id="GO:0010988">
    <property type="term" value="P:regulation of low-density lipoprotein particle clearance"/>
    <property type="evidence" value="ECO:0007669"/>
    <property type="project" value="Ensembl"/>
</dbReference>
<dbReference type="GO" id="GO:0031048">
    <property type="term" value="P:regulatory ncRNA-mediated heterochromatin formation"/>
    <property type="evidence" value="ECO:0007669"/>
    <property type="project" value="Ensembl"/>
</dbReference>
<dbReference type="GO" id="GO:0008380">
    <property type="term" value="P:RNA splicing"/>
    <property type="evidence" value="ECO:0007669"/>
    <property type="project" value="UniProtKB-KW"/>
</dbReference>
<dbReference type="CDD" id="cd22432">
    <property type="entry name" value="KH-I_HNRNPK_rpt1"/>
    <property type="match status" value="1"/>
</dbReference>
<dbReference type="CDD" id="cd22433">
    <property type="entry name" value="KH-I_HNRNPK_rpt2"/>
    <property type="match status" value="1"/>
</dbReference>
<dbReference type="CDD" id="cd22434">
    <property type="entry name" value="KH-I_HNRNPK_rpt3"/>
    <property type="match status" value="1"/>
</dbReference>
<dbReference type="FunFam" id="3.30.1370.10:FF:000021">
    <property type="entry name" value="Heterogeneous nuclear ribonucleoprotein K, like"/>
    <property type="match status" value="1"/>
</dbReference>
<dbReference type="FunFam" id="3.30.1370.10:FF:000023">
    <property type="entry name" value="Heterogeneous nuclear ribonucleoprotein K, like"/>
    <property type="match status" value="1"/>
</dbReference>
<dbReference type="FunFam" id="3.30.1370.10:FF:000025">
    <property type="entry name" value="Heterogeneous nuclear ribonucleoprotein K, like"/>
    <property type="match status" value="1"/>
</dbReference>
<dbReference type="Gene3D" id="3.30.1370.10">
    <property type="entry name" value="K Homology domain, type 1"/>
    <property type="match status" value="3"/>
</dbReference>
<dbReference type="InterPro" id="IPR004087">
    <property type="entry name" value="KH_dom"/>
</dbReference>
<dbReference type="InterPro" id="IPR004088">
    <property type="entry name" value="KH_dom_type_1"/>
</dbReference>
<dbReference type="InterPro" id="IPR036612">
    <property type="entry name" value="KH_dom_type_1_sf"/>
</dbReference>
<dbReference type="InterPro" id="IPR012987">
    <property type="entry name" value="ROK_N"/>
</dbReference>
<dbReference type="PANTHER" id="PTHR10288">
    <property type="entry name" value="KH DOMAIN CONTAINING RNA BINDING PROTEIN"/>
    <property type="match status" value="1"/>
</dbReference>
<dbReference type="Pfam" id="PF00013">
    <property type="entry name" value="KH_1"/>
    <property type="match status" value="3"/>
</dbReference>
<dbReference type="Pfam" id="PF08067">
    <property type="entry name" value="ROKNT"/>
    <property type="match status" value="1"/>
</dbReference>
<dbReference type="SMART" id="SM00322">
    <property type="entry name" value="KH"/>
    <property type="match status" value="3"/>
</dbReference>
<dbReference type="SUPFAM" id="SSF54791">
    <property type="entry name" value="Eukaryotic type KH-domain (KH-domain type I)"/>
    <property type="match status" value="3"/>
</dbReference>
<dbReference type="PROSITE" id="PS50084">
    <property type="entry name" value="KH_TYPE_1"/>
    <property type="match status" value="3"/>
</dbReference>
<name>HNRPK_MOUSE</name>
<evidence type="ECO:0000250" key="1"/>
<evidence type="ECO:0000250" key="2">
    <source>
        <dbReference type="UniProtKB" id="P61978"/>
    </source>
</evidence>
<evidence type="ECO:0000250" key="3">
    <source>
        <dbReference type="UniProtKB" id="P61980"/>
    </source>
</evidence>
<evidence type="ECO:0000255" key="4">
    <source>
        <dbReference type="PROSITE-ProRule" id="PRU00117"/>
    </source>
</evidence>
<evidence type="ECO:0000256" key="5">
    <source>
        <dbReference type="SAM" id="MobiDB-lite"/>
    </source>
</evidence>
<evidence type="ECO:0000269" key="6">
    <source>
    </source>
</evidence>
<evidence type="ECO:0000269" key="7">
    <source>
    </source>
</evidence>
<evidence type="ECO:0000269" key="8">
    <source>
    </source>
</evidence>
<evidence type="ECO:0000269" key="9">
    <source>
    </source>
</evidence>
<evidence type="ECO:0000303" key="10">
    <source>
    </source>
</evidence>
<evidence type="ECO:0000303" key="11">
    <source>
    </source>
</evidence>
<evidence type="ECO:0000303" key="12">
    <source>
    </source>
</evidence>
<evidence type="ECO:0000305" key="13"/>
<evidence type="ECO:0007744" key="14">
    <source>
    </source>
</evidence>
<evidence type="ECO:0007744" key="15">
    <source>
    </source>
</evidence>
<evidence type="ECO:0007744" key="16">
    <source>
    </source>
</evidence>
<evidence type="ECO:0007744" key="17">
    <source>
    </source>
</evidence>
<evidence type="ECO:0007744" key="18">
    <source>
    </source>
</evidence>
<proteinExistence type="evidence at protein level"/>